<name>RS17_BACC3</name>
<protein>
    <recommendedName>
        <fullName evidence="1">Small ribosomal subunit protein uS17</fullName>
    </recommendedName>
    <alternativeName>
        <fullName evidence="2">30S ribosomal protein S17</fullName>
    </alternativeName>
</protein>
<evidence type="ECO:0000255" key="1">
    <source>
        <dbReference type="HAMAP-Rule" id="MF_01345"/>
    </source>
</evidence>
<evidence type="ECO:0000305" key="2"/>
<sequence length="87" mass="10189">MSERNQRKVYTGRVVSDKMDKTITVLVETYKTHSLYGKRVKYSKKYKAHDEQNQAKLGDIVKIMETRPLSATKRFRLVEIVEEAVII</sequence>
<comment type="function">
    <text evidence="1">One of the primary rRNA binding proteins, it binds specifically to the 5'-end of 16S ribosomal RNA.</text>
</comment>
<comment type="subunit">
    <text evidence="1">Part of the 30S ribosomal subunit.</text>
</comment>
<comment type="similarity">
    <text evidence="1">Belongs to the universal ribosomal protein uS17 family.</text>
</comment>
<reference key="1">
    <citation type="submission" date="2009-02" db="EMBL/GenBank/DDBJ databases">
        <title>Genome sequence of Bacillus cereus 03BB102.</title>
        <authorList>
            <person name="Dodson R.J."/>
            <person name="Jackson P."/>
            <person name="Munk A.C."/>
            <person name="Brettin T."/>
            <person name="Bruce D."/>
            <person name="Detter C."/>
            <person name="Tapia R."/>
            <person name="Han C."/>
            <person name="Sutton G."/>
            <person name="Sims D."/>
        </authorList>
    </citation>
    <scope>NUCLEOTIDE SEQUENCE [LARGE SCALE GENOMIC DNA]</scope>
    <source>
        <strain>03BB102</strain>
    </source>
</reference>
<gene>
    <name evidence="1" type="primary">rpsQ</name>
    <name type="ordered locus">BCA_0148</name>
</gene>
<accession>C1ET48</accession>
<proteinExistence type="inferred from homology"/>
<dbReference type="EMBL" id="CP001407">
    <property type="protein sequence ID" value="ACO27881.1"/>
    <property type="molecule type" value="Genomic_DNA"/>
</dbReference>
<dbReference type="RefSeq" id="WP_000004106.1">
    <property type="nucleotide sequence ID" value="NZ_CP009318.1"/>
</dbReference>
<dbReference type="SMR" id="C1ET48"/>
<dbReference type="GeneID" id="93010934"/>
<dbReference type="KEGG" id="bcx:BCA_0148"/>
<dbReference type="PATRIC" id="fig|572264.18.peg.183"/>
<dbReference type="Proteomes" id="UP000002210">
    <property type="component" value="Chromosome"/>
</dbReference>
<dbReference type="GO" id="GO:0022627">
    <property type="term" value="C:cytosolic small ribosomal subunit"/>
    <property type="evidence" value="ECO:0007669"/>
    <property type="project" value="TreeGrafter"/>
</dbReference>
<dbReference type="GO" id="GO:0019843">
    <property type="term" value="F:rRNA binding"/>
    <property type="evidence" value="ECO:0007669"/>
    <property type="project" value="UniProtKB-UniRule"/>
</dbReference>
<dbReference type="GO" id="GO:0003735">
    <property type="term" value="F:structural constituent of ribosome"/>
    <property type="evidence" value="ECO:0007669"/>
    <property type="project" value="InterPro"/>
</dbReference>
<dbReference type="GO" id="GO:0006412">
    <property type="term" value="P:translation"/>
    <property type="evidence" value="ECO:0007669"/>
    <property type="project" value="UniProtKB-UniRule"/>
</dbReference>
<dbReference type="CDD" id="cd00364">
    <property type="entry name" value="Ribosomal_uS17"/>
    <property type="match status" value="1"/>
</dbReference>
<dbReference type="FunFam" id="2.40.50.140:FF:000026">
    <property type="entry name" value="30S ribosomal protein S17"/>
    <property type="match status" value="1"/>
</dbReference>
<dbReference type="Gene3D" id="2.40.50.140">
    <property type="entry name" value="Nucleic acid-binding proteins"/>
    <property type="match status" value="1"/>
</dbReference>
<dbReference type="HAMAP" id="MF_01345_B">
    <property type="entry name" value="Ribosomal_uS17_B"/>
    <property type="match status" value="1"/>
</dbReference>
<dbReference type="InterPro" id="IPR012340">
    <property type="entry name" value="NA-bd_OB-fold"/>
</dbReference>
<dbReference type="InterPro" id="IPR000266">
    <property type="entry name" value="Ribosomal_uS17"/>
</dbReference>
<dbReference type="InterPro" id="IPR019984">
    <property type="entry name" value="Ribosomal_uS17_bact/chlr"/>
</dbReference>
<dbReference type="InterPro" id="IPR019979">
    <property type="entry name" value="Ribosomal_uS17_CS"/>
</dbReference>
<dbReference type="NCBIfam" id="NF004123">
    <property type="entry name" value="PRK05610.1"/>
    <property type="match status" value="1"/>
</dbReference>
<dbReference type="NCBIfam" id="TIGR03635">
    <property type="entry name" value="uS17_bact"/>
    <property type="match status" value="1"/>
</dbReference>
<dbReference type="PANTHER" id="PTHR10744">
    <property type="entry name" value="40S RIBOSOMAL PROTEIN S11 FAMILY MEMBER"/>
    <property type="match status" value="1"/>
</dbReference>
<dbReference type="PANTHER" id="PTHR10744:SF1">
    <property type="entry name" value="SMALL RIBOSOMAL SUBUNIT PROTEIN US17M"/>
    <property type="match status" value="1"/>
</dbReference>
<dbReference type="Pfam" id="PF00366">
    <property type="entry name" value="Ribosomal_S17"/>
    <property type="match status" value="1"/>
</dbReference>
<dbReference type="PRINTS" id="PR00973">
    <property type="entry name" value="RIBOSOMALS17"/>
</dbReference>
<dbReference type="SUPFAM" id="SSF50249">
    <property type="entry name" value="Nucleic acid-binding proteins"/>
    <property type="match status" value="1"/>
</dbReference>
<dbReference type="PROSITE" id="PS00056">
    <property type="entry name" value="RIBOSOMAL_S17"/>
    <property type="match status" value="1"/>
</dbReference>
<keyword id="KW-0687">Ribonucleoprotein</keyword>
<keyword id="KW-0689">Ribosomal protein</keyword>
<keyword id="KW-0694">RNA-binding</keyword>
<keyword id="KW-0699">rRNA-binding</keyword>
<feature type="chain" id="PRO_1000166459" description="Small ribosomal subunit protein uS17">
    <location>
        <begin position="1"/>
        <end position="87"/>
    </location>
</feature>
<organism>
    <name type="scientific">Bacillus cereus (strain 03BB102)</name>
    <dbReference type="NCBI Taxonomy" id="572264"/>
    <lineage>
        <taxon>Bacteria</taxon>
        <taxon>Bacillati</taxon>
        <taxon>Bacillota</taxon>
        <taxon>Bacilli</taxon>
        <taxon>Bacillales</taxon>
        <taxon>Bacillaceae</taxon>
        <taxon>Bacillus</taxon>
        <taxon>Bacillus cereus group</taxon>
    </lineage>
</organism>